<feature type="chain" id="PRO_1000204092" description="RNA 3'-terminal phosphate cyclase">
    <location>
        <begin position="1"/>
        <end position="337"/>
    </location>
</feature>
<feature type="active site" description="Tele-AMP-histidine intermediate" evidence="1">
    <location>
        <position position="306"/>
    </location>
</feature>
<feature type="binding site" evidence="1">
    <location>
        <position position="101"/>
    </location>
    <ligand>
        <name>ATP</name>
        <dbReference type="ChEBI" id="CHEBI:30616"/>
    </ligand>
</feature>
<feature type="binding site" evidence="1">
    <location>
        <begin position="282"/>
        <end position="285"/>
    </location>
    <ligand>
        <name>ATP</name>
        <dbReference type="ChEBI" id="CHEBI:30616"/>
    </ligand>
</feature>
<reference key="1">
    <citation type="journal article" date="2009" name="Proc. Natl. Acad. Sci. U.S.A.">
        <title>Biogeography of the Sulfolobus islandicus pan-genome.</title>
        <authorList>
            <person name="Reno M.L."/>
            <person name="Held N.L."/>
            <person name="Fields C.J."/>
            <person name="Burke P.V."/>
            <person name="Whitaker R.J."/>
        </authorList>
    </citation>
    <scope>NUCLEOTIDE SEQUENCE [LARGE SCALE GENOMIC DNA]</scope>
    <source>
        <strain>M.16.27</strain>
    </source>
</reference>
<organism>
    <name type="scientific">Saccharolobus islandicus (strain M.16.27)</name>
    <name type="common">Sulfolobus islandicus</name>
    <dbReference type="NCBI Taxonomy" id="427318"/>
    <lineage>
        <taxon>Archaea</taxon>
        <taxon>Thermoproteota</taxon>
        <taxon>Thermoprotei</taxon>
        <taxon>Sulfolobales</taxon>
        <taxon>Sulfolobaceae</taxon>
        <taxon>Saccharolobus</taxon>
    </lineage>
</organism>
<comment type="function">
    <text evidence="1">Catalyzes the conversion of 3'-phosphate to a 2',3'-cyclic phosphodiester at the end of RNA. The mechanism of action of the enzyme occurs in 3 steps: (A) adenylation of the enzyme by ATP; (B) transfer of adenylate to an RNA-N3'P to produce RNA-N3'PP5'A; (C) and attack of the adjacent 2'-hydroxyl on the 3'-phosphorus in the diester linkage to produce the cyclic end product. The biological role of this enzyme is unknown but it is likely to function in some aspects of cellular RNA processing.</text>
</comment>
<comment type="catalytic activity">
    <reaction evidence="1">
        <text>a 3'-end 3'-phospho-ribonucleotide-RNA + ATP = a 3'-end 2',3'-cyclophospho-ribonucleotide-RNA + AMP + diphosphate</text>
        <dbReference type="Rhea" id="RHEA:23976"/>
        <dbReference type="Rhea" id="RHEA-COMP:10463"/>
        <dbReference type="Rhea" id="RHEA-COMP:10464"/>
        <dbReference type="ChEBI" id="CHEBI:30616"/>
        <dbReference type="ChEBI" id="CHEBI:33019"/>
        <dbReference type="ChEBI" id="CHEBI:83062"/>
        <dbReference type="ChEBI" id="CHEBI:83064"/>
        <dbReference type="ChEBI" id="CHEBI:456215"/>
        <dbReference type="EC" id="6.5.1.4"/>
    </reaction>
</comment>
<comment type="subcellular location">
    <subcellularLocation>
        <location evidence="1">Cytoplasm</location>
    </subcellularLocation>
</comment>
<comment type="similarity">
    <text evidence="1">Belongs to the RNA 3'-terminal cyclase family. Type 1 subfamily.</text>
</comment>
<gene>
    <name evidence="1" type="primary">rtcA</name>
    <name type="ordered locus">M1627_0235</name>
</gene>
<dbReference type="EC" id="6.5.1.4" evidence="1"/>
<dbReference type="EMBL" id="CP001401">
    <property type="protein sequence ID" value="ACP54264.1"/>
    <property type="molecule type" value="Genomic_DNA"/>
</dbReference>
<dbReference type="RefSeq" id="WP_012710411.1">
    <property type="nucleotide sequence ID" value="NC_012632.1"/>
</dbReference>
<dbReference type="SMR" id="C3N179"/>
<dbReference type="GeneID" id="84057785"/>
<dbReference type="KEGG" id="sim:M1627_0235"/>
<dbReference type="HOGENOM" id="CLU_027882_0_0_2"/>
<dbReference type="Proteomes" id="UP000002307">
    <property type="component" value="Chromosome"/>
</dbReference>
<dbReference type="GO" id="GO:0005737">
    <property type="term" value="C:cytoplasm"/>
    <property type="evidence" value="ECO:0007669"/>
    <property type="project" value="UniProtKB-SubCell"/>
</dbReference>
<dbReference type="GO" id="GO:0005524">
    <property type="term" value="F:ATP binding"/>
    <property type="evidence" value="ECO:0007669"/>
    <property type="project" value="UniProtKB-KW"/>
</dbReference>
<dbReference type="GO" id="GO:0003963">
    <property type="term" value="F:RNA-3'-phosphate cyclase activity"/>
    <property type="evidence" value="ECO:0007669"/>
    <property type="project" value="UniProtKB-UniRule"/>
</dbReference>
<dbReference type="GO" id="GO:0006396">
    <property type="term" value="P:RNA processing"/>
    <property type="evidence" value="ECO:0007669"/>
    <property type="project" value="InterPro"/>
</dbReference>
<dbReference type="CDD" id="cd00874">
    <property type="entry name" value="RNA_Cyclase_Class_II"/>
    <property type="match status" value="1"/>
</dbReference>
<dbReference type="FunFam" id="3.30.360.20:FF:000002">
    <property type="entry name" value="RNA terminal phosphate cyclase-like 1"/>
    <property type="match status" value="1"/>
</dbReference>
<dbReference type="Gene3D" id="3.65.10.20">
    <property type="entry name" value="RNA 3'-terminal phosphate cyclase domain"/>
    <property type="match status" value="1"/>
</dbReference>
<dbReference type="Gene3D" id="3.30.360.20">
    <property type="entry name" value="RNA 3'-terminal phosphate cyclase, insert domain"/>
    <property type="match status" value="1"/>
</dbReference>
<dbReference type="HAMAP" id="MF_00200">
    <property type="entry name" value="RTC"/>
    <property type="match status" value="1"/>
</dbReference>
<dbReference type="InterPro" id="IPR013791">
    <property type="entry name" value="RNA3'-term_phos_cycl_insert"/>
</dbReference>
<dbReference type="InterPro" id="IPR023797">
    <property type="entry name" value="RNA3'_phos_cyclase_dom"/>
</dbReference>
<dbReference type="InterPro" id="IPR037136">
    <property type="entry name" value="RNA3'_phos_cyclase_dom_sf"/>
</dbReference>
<dbReference type="InterPro" id="IPR000228">
    <property type="entry name" value="RNA3'_term_phos_cyc"/>
</dbReference>
<dbReference type="InterPro" id="IPR017770">
    <property type="entry name" value="RNA3'_term_phos_cyc_type_1"/>
</dbReference>
<dbReference type="InterPro" id="IPR020719">
    <property type="entry name" value="RNA3'_term_phos_cycl-like_CS"/>
</dbReference>
<dbReference type="InterPro" id="IPR013792">
    <property type="entry name" value="RNA3'P_cycl/enolpyr_Trfase_a/b"/>
</dbReference>
<dbReference type="InterPro" id="IPR036553">
    <property type="entry name" value="RPTC_insert"/>
</dbReference>
<dbReference type="NCBIfam" id="TIGR03399">
    <property type="entry name" value="RNA_3prim_cycl"/>
    <property type="match status" value="1"/>
</dbReference>
<dbReference type="PANTHER" id="PTHR11096">
    <property type="entry name" value="RNA 3' TERMINAL PHOSPHATE CYCLASE"/>
    <property type="match status" value="1"/>
</dbReference>
<dbReference type="PANTHER" id="PTHR11096:SF0">
    <property type="entry name" value="RNA 3'-TERMINAL PHOSPHATE CYCLASE"/>
    <property type="match status" value="1"/>
</dbReference>
<dbReference type="Pfam" id="PF01137">
    <property type="entry name" value="RTC"/>
    <property type="match status" value="1"/>
</dbReference>
<dbReference type="Pfam" id="PF05189">
    <property type="entry name" value="RTC_insert"/>
    <property type="match status" value="1"/>
</dbReference>
<dbReference type="PIRSF" id="PIRSF005378">
    <property type="entry name" value="RNA3'_term_phos_cycl_euk"/>
    <property type="match status" value="1"/>
</dbReference>
<dbReference type="SUPFAM" id="SSF55205">
    <property type="entry name" value="EPT/RTPC-like"/>
    <property type="match status" value="1"/>
</dbReference>
<dbReference type="PROSITE" id="PS01287">
    <property type="entry name" value="RTC"/>
    <property type="match status" value="1"/>
</dbReference>
<accession>C3N179</accession>
<proteinExistence type="inferred from homology"/>
<name>RTCA_SACI3</name>
<protein>
    <recommendedName>
        <fullName evidence="1">RNA 3'-terminal phosphate cyclase</fullName>
        <shortName evidence="1">RNA cyclase</shortName>
        <shortName evidence="1">RNA-3'-phosphate cyclase</shortName>
        <ecNumber evidence="1">6.5.1.4</ecNumber>
    </recommendedName>
</protein>
<sequence length="337" mass="36697">MIEIDGSFGEGGGQILRTSLTLSVITGKPFRIFNIRANRPNPGLQRQHLWAVKAMKMISNAETKGDEVGSKELIFVPHEIKGNINIDIDVGTAGSVTLIIQTVLPAIINKNVRIRIKGGTDVPKSPTIDYIRLVYLEILRKIGIEAKLNLIKRGHYPEGGGEVIIENVNGNPSAFSLLELGKLTIIKGISHVSSLPAHIAERQMNSARELLSKLGVPIEIQTDVRQGEVSKGSGIALAAIGEKSIIGADSLGERGKRAEIVGEEAARILIDNLNTKASVDIHMSDMLMIFASLYGGEYIGAELTSHAYTNMEIIKKFLDIKIDVSGKRPFRFKAKIF</sequence>
<evidence type="ECO:0000255" key="1">
    <source>
        <dbReference type="HAMAP-Rule" id="MF_00200"/>
    </source>
</evidence>
<keyword id="KW-0067">ATP-binding</keyword>
<keyword id="KW-0963">Cytoplasm</keyword>
<keyword id="KW-0436">Ligase</keyword>
<keyword id="KW-0547">Nucleotide-binding</keyword>